<protein>
    <recommendedName>
        <fullName evidence="1">Glycine dehydrogenase (decarboxylating)</fullName>
        <ecNumber evidence="1">1.4.4.2</ecNumber>
    </recommendedName>
    <alternativeName>
        <fullName evidence="1">Glycine cleavage system P-protein</fullName>
    </alternativeName>
    <alternativeName>
        <fullName evidence="1">Glycine decarboxylase</fullName>
    </alternativeName>
    <alternativeName>
        <fullName evidence="1">Glycine dehydrogenase (aminomethyl-transferring)</fullName>
    </alternativeName>
</protein>
<reference key="1">
    <citation type="journal article" date="2003" name="Proc. Natl. Acad. Sci. U.S.A.">
        <title>The complete genome sequence of Chromobacterium violaceum reveals remarkable and exploitable bacterial adaptability.</title>
        <authorList>
            <person name="Vasconcelos A.T.R."/>
            <person name="de Almeida D.F."/>
            <person name="Hungria M."/>
            <person name="Guimaraes C.T."/>
            <person name="Antonio R.V."/>
            <person name="Almeida F.C."/>
            <person name="de Almeida L.G.P."/>
            <person name="de Almeida R."/>
            <person name="Alves-Gomes J.A."/>
            <person name="Andrade E.M."/>
            <person name="Araripe J."/>
            <person name="de Araujo M.F.F."/>
            <person name="Astolfi-Filho S."/>
            <person name="Azevedo V."/>
            <person name="Baptista A.J."/>
            <person name="Bataus L.A.M."/>
            <person name="Batista J.S."/>
            <person name="Belo A."/>
            <person name="van den Berg C."/>
            <person name="Bogo M."/>
            <person name="Bonatto S."/>
            <person name="Bordignon J."/>
            <person name="Brigido M.M."/>
            <person name="Brito C.A."/>
            <person name="Brocchi M."/>
            <person name="Burity H.A."/>
            <person name="Camargo A.A."/>
            <person name="Cardoso D.D.P."/>
            <person name="Carneiro N.P."/>
            <person name="Carraro D.M."/>
            <person name="Carvalho C.M.B."/>
            <person name="Cascardo J.C.M."/>
            <person name="Cavada B.S."/>
            <person name="Chueire L.M.O."/>
            <person name="Creczynski-Pasa T.B."/>
            <person name="Cunha-Junior N.C."/>
            <person name="Fagundes N."/>
            <person name="Falcao C.L."/>
            <person name="Fantinatti F."/>
            <person name="Farias I.P."/>
            <person name="Felipe M.S.S."/>
            <person name="Ferrari L.P."/>
            <person name="Ferro J.A."/>
            <person name="Ferro M.I.T."/>
            <person name="Franco G.R."/>
            <person name="Freitas N.S.A."/>
            <person name="Furlan L.R."/>
            <person name="Gazzinelli R.T."/>
            <person name="Gomes E.A."/>
            <person name="Goncalves P.R."/>
            <person name="Grangeiro T.B."/>
            <person name="Grattapaglia D."/>
            <person name="Grisard E.C."/>
            <person name="Hanna E.S."/>
            <person name="Jardim S.N."/>
            <person name="Laurino J."/>
            <person name="Leoi L.C.T."/>
            <person name="Lima L.F.A."/>
            <person name="Loureiro M.F."/>
            <person name="Lyra M.C.C.P."/>
            <person name="Madeira H.M.F."/>
            <person name="Manfio G.P."/>
            <person name="Maranhao A.Q."/>
            <person name="Martins W.S."/>
            <person name="di Mauro S.M.Z."/>
            <person name="de Medeiros S.R.B."/>
            <person name="Meissner R.V."/>
            <person name="Moreira M.A.M."/>
            <person name="Nascimento F.F."/>
            <person name="Nicolas M.F."/>
            <person name="Oliveira J.G."/>
            <person name="Oliveira S.C."/>
            <person name="Paixao R.F.C."/>
            <person name="Parente J.A."/>
            <person name="Pedrosa F.O."/>
            <person name="Pena S.D.J."/>
            <person name="Pereira J.O."/>
            <person name="Pereira M."/>
            <person name="Pinto L.S.R.C."/>
            <person name="Pinto L.S."/>
            <person name="Porto J.I.R."/>
            <person name="Potrich D.P."/>
            <person name="Ramalho-Neto C.E."/>
            <person name="Reis A.M.M."/>
            <person name="Rigo L.U."/>
            <person name="Rondinelli E."/>
            <person name="Santos E.B.P."/>
            <person name="Santos F.R."/>
            <person name="Schneider M.P.C."/>
            <person name="Seuanez H.N."/>
            <person name="Silva A.M.R."/>
            <person name="da Silva A.L.C."/>
            <person name="Silva D.W."/>
            <person name="Silva R."/>
            <person name="Simoes I.C."/>
            <person name="Simon D."/>
            <person name="Soares C.M.A."/>
            <person name="Soares R.B.A."/>
            <person name="Souza E.M."/>
            <person name="Souza K.R.L."/>
            <person name="Souza R.C."/>
            <person name="Steffens M.B.R."/>
            <person name="Steindel M."/>
            <person name="Teixeira S.R."/>
            <person name="Urmenyi T."/>
            <person name="Vettore A."/>
            <person name="Wassem R."/>
            <person name="Zaha A."/>
            <person name="Simpson A.J.G."/>
        </authorList>
    </citation>
    <scope>NUCLEOTIDE SEQUENCE [LARGE SCALE GENOMIC DNA]</scope>
    <source>
        <strain>ATCC 12472 / DSM 30191 / JCM 1249 / CCUG 213 / NBRC 12614 / NCIMB 9131 / NCTC 9757 / MK</strain>
    </source>
</reference>
<evidence type="ECO:0000255" key="1">
    <source>
        <dbReference type="HAMAP-Rule" id="MF_00711"/>
    </source>
</evidence>
<comment type="function">
    <text evidence="1">The glycine cleavage system catalyzes the degradation of glycine. The P protein binds the alpha-amino group of glycine through its pyridoxal phosphate cofactor; CO(2) is released and the remaining methylamine moiety is then transferred to the lipoamide cofactor of the H protein.</text>
</comment>
<comment type="catalytic activity">
    <reaction evidence="1">
        <text>N(6)-[(R)-lipoyl]-L-lysyl-[glycine-cleavage complex H protein] + glycine + H(+) = N(6)-[(R)-S(8)-aminomethyldihydrolipoyl]-L-lysyl-[glycine-cleavage complex H protein] + CO2</text>
        <dbReference type="Rhea" id="RHEA:24304"/>
        <dbReference type="Rhea" id="RHEA-COMP:10494"/>
        <dbReference type="Rhea" id="RHEA-COMP:10495"/>
        <dbReference type="ChEBI" id="CHEBI:15378"/>
        <dbReference type="ChEBI" id="CHEBI:16526"/>
        <dbReference type="ChEBI" id="CHEBI:57305"/>
        <dbReference type="ChEBI" id="CHEBI:83099"/>
        <dbReference type="ChEBI" id="CHEBI:83143"/>
        <dbReference type="EC" id="1.4.4.2"/>
    </reaction>
</comment>
<comment type="cofactor">
    <cofactor evidence="1">
        <name>pyridoxal 5'-phosphate</name>
        <dbReference type="ChEBI" id="CHEBI:597326"/>
    </cofactor>
</comment>
<comment type="subunit">
    <text evidence="1">The glycine cleavage system is composed of four proteins: P, T, L and H.</text>
</comment>
<comment type="similarity">
    <text evidence="1">Belongs to the GcvP family.</text>
</comment>
<sequence length="950" mass="102268">MSLTELFNRHEFLARHIGPSDAERAEMLAAVGAPSIDALVDQTLPADIRLNRRLDLPSPQPEAEALAALKAVASKNVVNKSFIGLGYYPVLTPTVILRNVLENPGWYTAYTPYQAEIAQGRLEALLNFQQMVIDLTGLEMANASLLDEATAAAEAMAMAGRVSKSKSTRFFVDSRVLPQTLDVMKTRAKYFGFELVQGHPEEAGNGDYFGALFQYPGEAGDLLDLTPHIAAVKAKGGVVAVAADVMALVALKSPAEMGADIALGNTQRFGVPMGFGGPHAAYFAFKDEMKRSAPGRIIGVSIDAKGKTALRMALQTREQHIRREKANSNICTSQVLLANIAGLYAVYHGAEGVRRIAARIHRLAAIFAHAVKEAGGKLVFDRFFDTVQVDAPKADAIYAAALAAGYNLRRVGKTVLGVAFHEAATESDLAKLIELFTGKPADIAALDAAALDAIPAALKRESAILTHPVFNTHHSEHEMLRYMKKLENRDLAMNHSMISLGSCTMKLNATSEMIPITWPEFANMHPFAPREQTVGYLELIEGLQKQLKAITGFDAISMQPNSGAQGEYAGLLAISRYHESRGEAHRNICLIPQSAHGTNPATAQMMNMQVVVVKCDEAGNVDVADLKAKAEQHAANLAALMITYPSTHGVFEQGIKEICEIVHAHGGQVYMDGANLNAQVGLTRPADIGADVSHMNLHKTFCIPHGGGGPGMGPIGLKAHLAPFIANHVVAPVPGAVEGQTAVSAAPFGSASILPISYMYIAMMGAEGMKQATENALLSANYLATRLSEHFPVLYTGANGRVAHECIIDLRPLKAASGVTEVDVAKRLMDYGFHAPTMSFPVPGTLMIEPTESEPKAELDRFIAAMAAIRAEIDRVQSGAWPADNNPLVNAPHSKADIAGDWDRPYSREQGLFPLPYVLENKFWPSVNRIDDVYGDRNVVCSCPSTESYM</sequence>
<organism>
    <name type="scientific">Chromobacterium violaceum (strain ATCC 12472 / DSM 30191 / JCM 1249 / CCUG 213 / NBRC 12614 / NCIMB 9131 / NCTC 9757 / MK)</name>
    <dbReference type="NCBI Taxonomy" id="243365"/>
    <lineage>
        <taxon>Bacteria</taxon>
        <taxon>Pseudomonadati</taxon>
        <taxon>Pseudomonadota</taxon>
        <taxon>Betaproteobacteria</taxon>
        <taxon>Neisseriales</taxon>
        <taxon>Chromobacteriaceae</taxon>
        <taxon>Chromobacterium</taxon>
    </lineage>
</organism>
<feature type="chain" id="PRO_0000166911" description="Glycine dehydrogenase (decarboxylating)">
    <location>
        <begin position="1"/>
        <end position="950"/>
    </location>
</feature>
<feature type="modified residue" description="N6-(pyridoxal phosphate)lysine" evidence="1">
    <location>
        <position position="699"/>
    </location>
</feature>
<name>GCSP_CHRVO</name>
<gene>
    <name evidence="1" type="primary">gcvP</name>
    <name type="ordered locus">CV_3429</name>
</gene>
<accession>Q7NSJ5</accession>
<proteinExistence type="inferred from homology"/>
<keyword id="KW-0560">Oxidoreductase</keyword>
<keyword id="KW-0663">Pyridoxal phosphate</keyword>
<keyword id="KW-1185">Reference proteome</keyword>
<dbReference type="EC" id="1.4.4.2" evidence="1"/>
<dbReference type="EMBL" id="AE016825">
    <property type="protein sequence ID" value="AAQ61092.1"/>
    <property type="molecule type" value="Genomic_DNA"/>
</dbReference>
<dbReference type="RefSeq" id="WP_011136976.1">
    <property type="nucleotide sequence ID" value="NC_005085.1"/>
</dbReference>
<dbReference type="SMR" id="Q7NSJ5"/>
<dbReference type="STRING" id="243365.CV_3429"/>
<dbReference type="KEGG" id="cvi:CV_3429"/>
<dbReference type="eggNOG" id="COG0403">
    <property type="taxonomic scope" value="Bacteria"/>
</dbReference>
<dbReference type="eggNOG" id="COG1003">
    <property type="taxonomic scope" value="Bacteria"/>
</dbReference>
<dbReference type="HOGENOM" id="CLU_004620_1_1_4"/>
<dbReference type="OrthoDB" id="9801272at2"/>
<dbReference type="Proteomes" id="UP000001424">
    <property type="component" value="Chromosome"/>
</dbReference>
<dbReference type="GO" id="GO:0005829">
    <property type="term" value="C:cytosol"/>
    <property type="evidence" value="ECO:0007669"/>
    <property type="project" value="TreeGrafter"/>
</dbReference>
<dbReference type="GO" id="GO:0005960">
    <property type="term" value="C:glycine cleavage complex"/>
    <property type="evidence" value="ECO:0007669"/>
    <property type="project" value="TreeGrafter"/>
</dbReference>
<dbReference type="GO" id="GO:0016594">
    <property type="term" value="F:glycine binding"/>
    <property type="evidence" value="ECO:0007669"/>
    <property type="project" value="TreeGrafter"/>
</dbReference>
<dbReference type="GO" id="GO:0004375">
    <property type="term" value="F:glycine dehydrogenase (decarboxylating) activity"/>
    <property type="evidence" value="ECO:0007669"/>
    <property type="project" value="UniProtKB-EC"/>
</dbReference>
<dbReference type="GO" id="GO:0030170">
    <property type="term" value="F:pyridoxal phosphate binding"/>
    <property type="evidence" value="ECO:0007669"/>
    <property type="project" value="TreeGrafter"/>
</dbReference>
<dbReference type="GO" id="GO:0019464">
    <property type="term" value="P:glycine decarboxylation via glycine cleavage system"/>
    <property type="evidence" value="ECO:0007669"/>
    <property type="project" value="UniProtKB-UniRule"/>
</dbReference>
<dbReference type="CDD" id="cd00613">
    <property type="entry name" value="GDC-P"/>
    <property type="match status" value="1"/>
</dbReference>
<dbReference type="FunFam" id="3.40.640.10:FF:000005">
    <property type="entry name" value="Glycine dehydrogenase (decarboxylating), mitochondrial"/>
    <property type="match status" value="1"/>
</dbReference>
<dbReference type="FunFam" id="3.90.1150.10:FF:000007">
    <property type="entry name" value="Glycine dehydrogenase (decarboxylating), mitochondrial"/>
    <property type="match status" value="1"/>
</dbReference>
<dbReference type="FunFam" id="3.40.640.10:FF:000007">
    <property type="entry name" value="glycine dehydrogenase (Decarboxylating), mitochondrial"/>
    <property type="match status" value="1"/>
</dbReference>
<dbReference type="Gene3D" id="3.90.1150.10">
    <property type="entry name" value="Aspartate Aminotransferase, domain 1"/>
    <property type="match status" value="2"/>
</dbReference>
<dbReference type="Gene3D" id="3.40.640.10">
    <property type="entry name" value="Type I PLP-dependent aspartate aminotransferase-like (Major domain)"/>
    <property type="match status" value="2"/>
</dbReference>
<dbReference type="HAMAP" id="MF_00711">
    <property type="entry name" value="GcvP"/>
    <property type="match status" value="1"/>
</dbReference>
<dbReference type="InterPro" id="IPR003437">
    <property type="entry name" value="GcvP"/>
</dbReference>
<dbReference type="InterPro" id="IPR049316">
    <property type="entry name" value="GDC-P_C"/>
</dbReference>
<dbReference type="InterPro" id="IPR049315">
    <property type="entry name" value="GDC-P_N"/>
</dbReference>
<dbReference type="InterPro" id="IPR020581">
    <property type="entry name" value="GDC_P"/>
</dbReference>
<dbReference type="InterPro" id="IPR015424">
    <property type="entry name" value="PyrdxlP-dep_Trfase"/>
</dbReference>
<dbReference type="InterPro" id="IPR015421">
    <property type="entry name" value="PyrdxlP-dep_Trfase_major"/>
</dbReference>
<dbReference type="InterPro" id="IPR015422">
    <property type="entry name" value="PyrdxlP-dep_Trfase_small"/>
</dbReference>
<dbReference type="NCBIfam" id="TIGR00461">
    <property type="entry name" value="gcvP"/>
    <property type="match status" value="1"/>
</dbReference>
<dbReference type="NCBIfam" id="NF003346">
    <property type="entry name" value="PRK04366.1"/>
    <property type="match status" value="1"/>
</dbReference>
<dbReference type="PANTHER" id="PTHR11773:SF13">
    <property type="entry name" value="GLYCINE DEHYDROGENASE (DECARBOXYLATING)"/>
    <property type="match status" value="1"/>
</dbReference>
<dbReference type="PANTHER" id="PTHR11773">
    <property type="entry name" value="GLYCINE DEHYDROGENASE, DECARBOXYLATING"/>
    <property type="match status" value="1"/>
</dbReference>
<dbReference type="Pfam" id="PF21478">
    <property type="entry name" value="GcvP2_C"/>
    <property type="match status" value="1"/>
</dbReference>
<dbReference type="Pfam" id="PF02347">
    <property type="entry name" value="GDC-P"/>
    <property type="match status" value="2"/>
</dbReference>
<dbReference type="SUPFAM" id="SSF53383">
    <property type="entry name" value="PLP-dependent transferases"/>
    <property type="match status" value="2"/>
</dbReference>